<protein>
    <recommendedName>
        <fullName evidence="1">Nucleotide-binding protein Reut_A2760</fullName>
    </recommendedName>
</protein>
<dbReference type="EMBL" id="CP000090">
    <property type="protein sequence ID" value="AAZ62121.1"/>
    <property type="molecule type" value="Genomic_DNA"/>
</dbReference>
<dbReference type="SMR" id="Q46XL2"/>
<dbReference type="STRING" id="264198.Reut_A2760"/>
<dbReference type="KEGG" id="reu:Reut_A2760"/>
<dbReference type="eggNOG" id="COG1666">
    <property type="taxonomic scope" value="Bacteria"/>
</dbReference>
<dbReference type="HOGENOM" id="CLU_099839_1_0_4"/>
<dbReference type="OrthoDB" id="9801447at2"/>
<dbReference type="GO" id="GO:0005829">
    <property type="term" value="C:cytosol"/>
    <property type="evidence" value="ECO:0007669"/>
    <property type="project" value="TreeGrafter"/>
</dbReference>
<dbReference type="GO" id="GO:0000166">
    <property type="term" value="F:nucleotide binding"/>
    <property type="evidence" value="ECO:0007669"/>
    <property type="project" value="TreeGrafter"/>
</dbReference>
<dbReference type="CDD" id="cd11740">
    <property type="entry name" value="YajQ_like"/>
    <property type="match status" value="1"/>
</dbReference>
<dbReference type="Gene3D" id="3.30.70.860">
    <property type="match status" value="1"/>
</dbReference>
<dbReference type="Gene3D" id="3.30.70.990">
    <property type="entry name" value="YajQ-like, domain 2"/>
    <property type="match status" value="1"/>
</dbReference>
<dbReference type="HAMAP" id="MF_00632">
    <property type="entry name" value="YajQ"/>
    <property type="match status" value="1"/>
</dbReference>
<dbReference type="InterPro" id="IPR007551">
    <property type="entry name" value="DUF520"/>
</dbReference>
<dbReference type="InterPro" id="IPR035571">
    <property type="entry name" value="UPF0234-like_C"/>
</dbReference>
<dbReference type="InterPro" id="IPR035570">
    <property type="entry name" value="UPF0234_N"/>
</dbReference>
<dbReference type="InterPro" id="IPR036183">
    <property type="entry name" value="YajQ-like_sf"/>
</dbReference>
<dbReference type="NCBIfam" id="NF003819">
    <property type="entry name" value="PRK05412.1"/>
    <property type="match status" value="1"/>
</dbReference>
<dbReference type="PANTHER" id="PTHR30476">
    <property type="entry name" value="UPF0234 PROTEIN YAJQ"/>
    <property type="match status" value="1"/>
</dbReference>
<dbReference type="PANTHER" id="PTHR30476:SF0">
    <property type="entry name" value="UPF0234 PROTEIN YAJQ"/>
    <property type="match status" value="1"/>
</dbReference>
<dbReference type="Pfam" id="PF04461">
    <property type="entry name" value="DUF520"/>
    <property type="match status" value="1"/>
</dbReference>
<dbReference type="SUPFAM" id="SSF89963">
    <property type="entry name" value="YajQ-like"/>
    <property type="match status" value="2"/>
</dbReference>
<feature type="chain" id="PRO_0000261965" description="Nucleotide-binding protein Reut_A2760">
    <location>
        <begin position="1"/>
        <end position="161"/>
    </location>
</feature>
<comment type="function">
    <text evidence="1">Nucleotide-binding protein.</text>
</comment>
<comment type="similarity">
    <text evidence="1">Belongs to the YajQ family.</text>
</comment>
<evidence type="ECO:0000255" key="1">
    <source>
        <dbReference type="HAMAP-Rule" id="MF_00632"/>
    </source>
</evidence>
<proteinExistence type="inferred from homology"/>
<sequence>MPSFDVVCEANMVEVKNAVEQANKEISTRFDFKGSDARVEQKEGELTAFADDDFKLGQVKDVLLNKMAKRNVDVRFLDYGKVEKISGDKVKQVITIKKGVTGDLGKKIVRMIKDSKIKVQGSIQGDAVRVSGTKRDDLQSVIAMLRKDVSEAPLDFNNFRD</sequence>
<name>Y2760_CUPPJ</name>
<gene>
    <name type="ordered locus">Reut_A2760</name>
</gene>
<reference key="1">
    <citation type="journal article" date="2010" name="PLoS ONE">
        <title>The complete multipartite genome sequence of Cupriavidus necator JMP134, a versatile pollutant degrader.</title>
        <authorList>
            <person name="Lykidis A."/>
            <person name="Perez-Pantoja D."/>
            <person name="Ledger T."/>
            <person name="Mavromatis K."/>
            <person name="Anderson I.J."/>
            <person name="Ivanova N.N."/>
            <person name="Hooper S.D."/>
            <person name="Lapidus A."/>
            <person name="Lucas S."/>
            <person name="Gonzalez B."/>
            <person name="Kyrpides N.C."/>
        </authorList>
    </citation>
    <scope>NUCLEOTIDE SEQUENCE [LARGE SCALE GENOMIC DNA]</scope>
    <source>
        <strain>JMP134 / LMG 1197</strain>
    </source>
</reference>
<accession>Q46XL2</accession>
<organism>
    <name type="scientific">Cupriavidus pinatubonensis (strain JMP 134 / LMG 1197)</name>
    <name type="common">Cupriavidus necator (strain JMP 134)</name>
    <dbReference type="NCBI Taxonomy" id="264198"/>
    <lineage>
        <taxon>Bacteria</taxon>
        <taxon>Pseudomonadati</taxon>
        <taxon>Pseudomonadota</taxon>
        <taxon>Betaproteobacteria</taxon>
        <taxon>Burkholderiales</taxon>
        <taxon>Burkholderiaceae</taxon>
        <taxon>Cupriavidus</taxon>
    </lineage>
</organism>
<keyword id="KW-0547">Nucleotide-binding</keyword>